<organism>
    <name type="scientific">Mus musculus</name>
    <name type="common">Mouse</name>
    <dbReference type="NCBI Taxonomy" id="10090"/>
    <lineage>
        <taxon>Eukaryota</taxon>
        <taxon>Metazoa</taxon>
        <taxon>Chordata</taxon>
        <taxon>Craniata</taxon>
        <taxon>Vertebrata</taxon>
        <taxon>Euteleostomi</taxon>
        <taxon>Mammalia</taxon>
        <taxon>Eutheria</taxon>
        <taxon>Euarchontoglires</taxon>
        <taxon>Glires</taxon>
        <taxon>Rodentia</taxon>
        <taxon>Myomorpha</taxon>
        <taxon>Muroidea</taxon>
        <taxon>Muridae</taxon>
        <taxon>Murinae</taxon>
        <taxon>Mus</taxon>
        <taxon>Mus</taxon>
    </lineage>
</organism>
<feature type="signal peptide" evidence="3">
    <location>
        <begin position="1"/>
        <end position="36"/>
    </location>
</feature>
<feature type="chain" id="PRO_0000015044" description="Neogenin">
    <location>
        <begin position="37"/>
        <end position="1492"/>
    </location>
</feature>
<feature type="topological domain" description="Extracellular" evidence="3">
    <location>
        <begin position="37"/>
        <end position="1136"/>
    </location>
</feature>
<feature type="transmembrane region" description="Helical" evidence="3">
    <location>
        <begin position="1137"/>
        <end position="1157"/>
    </location>
</feature>
<feature type="topological domain" description="Cytoplasmic" evidence="3">
    <location>
        <begin position="1158"/>
        <end position="1492"/>
    </location>
</feature>
<feature type="domain" description="Ig-like C2-type 1">
    <location>
        <begin position="63"/>
        <end position="158"/>
    </location>
</feature>
<feature type="domain" description="Ig-like C2-type 2">
    <location>
        <begin position="163"/>
        <end position="249"/>
    </location>
</feature>
<feature type="domain" description="Ig-like C2-type 3">
    <location>
        <begin position="254"/>
        <end position="347"/>
    </location>
</feature>
<feature type="domain" description="Ig-like C2-type 4">
    <location>
        <begin position="352"/>
        <end position="437"/>
    </location>
</feature>
<feature type="domain" description="Fibronectin type-III 1" evidence="5">
    <location>
        <begin position="472"/>
        <end position="566"/>
    </location>
</feature>
<feature type="domain" description="Fibronectin type-III 2" evidence="5">
    <location>
        <begin position="572"/>
        <end position="662"/>
    </location>
</feature>
<feature type="domain" description="Fibronectin type-III 3" evidence="5">
    <location>
        <begin position="667"/>
        <end position="762"/>
    </location>
</feature>
<feature type="domain" description="Fibronectin type-III 4" evidence="5">
    <location>
        <begin position="772"/>
        <end position="862"/>
    </location>
</feature>
<feature type="domain" description="Fibronectin type-III 5" evidence="5">
    <location>
        <begin position="887"/>
        <end position="986"/>
    </location>
</feature>
<feature type="domain" description="Fibronectin type-III 6" evidence="5">
    <location>
        <begin position="988"/>
        <end position="1085"/>
    </location>
</feature>
<feature type="region of interest" description="Disordered" evidence="6">
    <location>
        <begin position="1072"/>
        <end position="1128"/>
    </location>
</feature>
<feature type="region of interest" description="Disordered" evidence="6">
    <location>
        <begin position="1205"/>
        <end position="1237"/>
    </location>
</feature>
<feature type="region of interest" description="Disordered" evidence="6">
    <location>
        <begin position="1266"/>
        <end position="1300"/>
    </location>
</feature>
<feature type="region of interest" description="Disordered" evidence="6">
    <location>
        <begin position="1321"/>
        <end position="1396"/>
    </location>
</feature>
<feature type="compositionally biased region" description="Basic and acidic residues" evidence="6">
    <location>
        <begin position="1083"/>
        <end position="1092"/>
    </location>
</feature>
<feature type="compositionally biased region" description="Polar residues" evidence="6">
    <location>
        <begin position="1118"/>
        <end position="1128"/>
    </location>
</feature>
<feature type="compositionally biased region" description="Polar residues" evidence="6">
    <location>
        <begin position="1222"/>
        <end position="1237"/>
    </location>
</feature>
<feature type="compositionally biased region" description="Polar residues" evidence="6">
    <location>
        <begin position="1321"/>
        <end position="1353"/>
    </location>
</feature>
<feature type="compositionally biased region" description="Polar residues" evidence="6">
    <location>
        <begin position="1361"/>
        <end position="1380"/>
    </location>
</feature>
<feature type="modified residue" description="Phosphoserine" evidence="14">
    <location>
        <position position="1209"/>
    </location>
</feature>
<feature type="modified residue" description="Phosphoserine" evidence="14">
    <location>
        <position position="1225"/>
    </location>
</feature>
<feature type="modified residue" description="Phosphothreonine" evidence="14">
    <location>
        <position position="1229"/>
    </location>
</feature>
<feature type="modified residue" description="Phosphoserine" evidence="2">
    <location>
        <position position="1432"/>
    </location>
</feature>
<feature type="modified residue" description="Phosphothreonine" evidence="2">
    <location>
        <position position="1435"/>
    </location>
</feature>
<feature type="modified residue" description="Phosphoserine" evidence="14">
    <location>
        <position position="1463"/>
    </location>
</feature>
<feature type="modified residue" description="Phosphoserine" evidence="2">
    <location>
        <position position="1465"/>
    </location>
</feature>
<feature type="modified residue" description="Phosphoserine" evidence="14">
    <location>
        <position position="1466"/>
    </location>
</feature>
<feature type="glycosylation site" description="N-linked (GlcNAc...) asparagine" evidence="3">
    <location>
        <position position="84"/>
    </location>
</feature>
<feature type="glycosylation site" description="N-linked (GlcNAc...) asparagine" evidence="9 10">
    <location>
        <position position="221"/>
    </location>
</feature>
<feature type="glycosylation site" description="N-linked (GlcNAc...) asparagine" evidence="3">
    <location>
        <position position="337"/>
    </location>
</feature>
<feature type="glycosylation site" description="N-linked (GlcNAc...) asparagine" evidence="9 10">
    <location>
        <position position="501"/>
    </location>
</feature>
<feature type="glycosylation site" description="N-linked (GlcNAc...) asparagine" evidence="3">
    <location>
        <position position="520"/>
    </location>
</feature>
<feature type="glycosylation site" description="N-linked (GlcNAc...) asparagine" evidence="9">
    <location>
        <position position="670"/>
    </location>
</feature>
<feature type="glycosylation site" description="N-linked (GlcNAc...) asparagine" evidence="3">
    <location>
        <position position="746"/>
    </location>
</feature>
<feature type="glycosylation site" description="N-linked (GlcNAc...) asparagine" evidence="3">
    <location>
        <position position="940"/>
    </location>
</feature>
<feature type="disulfide bond" evidence="4">
    <location>
        <begin position="85"/>
        <end position="140"/>
    </location>
</feature>
<feature type="disulfide bond" evidence="4">
    <location>
        <begin position="184"/>
        <end position="232"/>
    </location>
</feature>
<feature type="disulfide bond" evidence="4">
    <location>
        <begin position="281"/>
        <end position="331"/>
    </location>
</feature>
<feature type="disulfide bond" evidence="4">
    <location>
        <begin position="373"/>
        <end position="421"/>
    </location>
</feature>
<feature type="splice variant" id="VSP_002594" description="In isoform 2." evidence="12">
    <location>
        <begin position="442"/>
        <end position="461"/>
    </location>
</feature>
<feature type="splice variant" id="VSP_002595" description="In isoform 3." evidence="12">
    <location>
        <begin position="863"/>
        <end position="878"/>
    </location>
</feature>
<feature type="splice variant" id="VSP_002596" description="In isoform 4." evidence="12">
    <location>
        <begin position="1086"/>
        <end position="1096"/>
    </location>
</feature>
<feature type="splice variant" id="VSP_002597" description="In isoform 5." evidence="12">
    <location>
        <begin position="1279"/>
        <end position="1331"/>
    </location>
</feature>
<feature type="sequence conflict" description="In Ref. 1; CAA70727." evidence="12" ref="1">
    <original>A</original>
    <variation>Q</variation>
    <location>
        <position position="54"/>
    </location>
</feature>
<feature type="sequence conflict" description="In Ref. 1; CAA70727." evidence="12" ref="1">
    <original>Y</original>
    <variation>N</variation>
    <location>
        <position position="397"/>
    </location>
</feature>
<feature type="sequence conflict" description="In Ref. 1; CAA70727." evidence="12" ref="1">
    <original>A</original>
    <variation>D</variation>
    <location>
        <position position="514"/>
    </location>
</feature>
<feature type="strand" evidence="16">
    <location>
        <begin position="773"/>
        <end position="780"/>
    </location>
</feature>
<feature type="strand" evidence="16">
    <location>
        <begin position="785"/>
        <end position="793"/>
    </location>
</feature>
<feature type="strand" evidence="16">
    <location>
        <begin position="795"/>
        <end position="797"/>
    </location>
</feature>
<feature type="strand" evidence="16">
    <location>
        <begin position="801"/>
        <end position="810"/>
    </location>
</feature>
<feature type="strand" evidence="16">
    <location>
        <begin position="813"/>
        <end position="819"/>
    </location>
</feature>
<feature type="strand" evidence="16">
    <location>
        <begin position="823"/>
        <end position="827"/>
    </location>
</feature>
<feature type="strand" evidence="16">
    <location>
        <begin position="835"/>
        <end position="844"/>
    </location>
</feature>
<feature type="strand" evidence="16">
    <location>
        <begin position="852"/>
        <end position="857"/>
    </location>
</feature>
<feature type="strand" evidence="15">
    <location>
        <begin position="889"/>
        <end position="895"/>
    </location>
</feature>
<feature type="strand" evidence="15">
    <location>
        <begin position="897"/>
        <end position="899"/>
    </location>
</feature>
<feature type="strand" evidence="15">
    <location>
        <begin position="901"/>
        <end position="906"/>
    </location>
</feature>
<feature type="strand" evidence="15">
    <location>
        <begin position="921"/>
        <end position="927"/>
    </location>
</feature>
<feature type="strand" evidence="15">
    <location>
        <begin position="937"/>
        <end position="948"/>
    </location>
</feature>
<feature type="strand" evidence="15">
    <location>
        <begin position="956"/>
        <end position="965"/>
    </location>
</feature>
<feature type="strand" evidence="15">
    <location>
        <begin position="968"/>
        <end position="970"/>
    </location>
</feature>
<feature type="strand" evidence="15">
    <location>
        <begin position="976"/>
        <end position="979"/>
    </location>
</feature>
<feature type="strand" evidence="15">
    <location>
        <begin position="990"/>
        <end position="997"/>
    </location>
</feature>
<feature type="strand" evidence="15">
    <location>
        <begin position="1000"/>
        <end position="1009"/>
    </location>
</feature>
<feature type="strand" evidence="15">
    <location>
        <begin position="1020"/>
        <end position="1027"/>
    </location>
</feature>
<feature type="helix" evidence="15">
    <location>
        <begin position="1033"/>
        <end position="1035"/>
    </location>
</feature>
<feature type="strand" evidence="15">
    <location>
        <begin position="1036"/>
        <end position="1042"/>
    </location>
</feature>
<feature type="strand" evidence="15">
    <location>
        <begin position="1047"/>
        <end position="1050"/>
    </location>
</feature>
<feature type="strand" evidence="15">
    <location>
        <begin position="1058"/>
        <end position="1067"/>
    </location>
</feature>
<feature type="strand" evidence="15">
    <location>
        <begin position="1070"/>
        <end position="1074"/>
    </location>
</feature>
<feature type="strand" evidence="15">
    <location>
        <begin position="1078"/>
        <end position="1081"/>
    </location>
</feature>
<comment type="function">
    <text evidence="11">Multi-functional cell surface receptor regulating cell adhesion in many diverse developmental processes, including neural tube and mammary gland formation, myogenesis and angiogenesis. Receptor for members of the BMP, netrin, and repulsive guidance molecule (RGM) families. Netrin-Neogenin interactions result in a chemoattractive axon guidance response and cell-cell adhesion, the interaction between NEO1/Neogenin and RGMa and RGMb induces a chemorepulsive response.</text>
</comment>
<comment type="subunit">
    <text evidence="1 7 8 11">Interacts with BMP2, BMP4, BMP6, and BMP7 (By similarity). Interacts with RGMA and RGMB. Interacts with MYO10.</text>
</comment>
<comment type="interaction">
    <interactant intactId="EBI-774991">
        <id>P97798</id>
    </interactant>
    <interactant intactId="EBI-16155464">
        <id>Q6NW40</id>
        <label>RGMB</label>
    </interactant>
    <organismsDiffer>true</organismsDiffer>
    <experiments>2</experiments>
</comment>
<comment type="interaction">
    <interactant intactId="EBI-40201781">
        <id>P97798-1</id>
    </interactant>
    <interactant intactId="EBI-6445959">
        <id>F8VQB6</id>
        <label>Myo10</label>
    </interactant>
    <organismsDiffer>false</organismsDiffer>
    <experiments>2</experiments>
</comment>
<comment type="subcellular location">
    <subcellularLocation>
        <location>Cell membrane</location>
        <topology>Single-pass type I membrane protein</topology>
    </subcellularLocation>
</comment>
<comment type="alternative products">
    <event type="alternative splicing"/>
    <isoform>
        <id>P97798-1</id>
        <name>1</name>
        <sequence type="displayed"/>
    </isoform>
    <isoform>
        <id>P97798-2</id>
        <name>2</name>
        <sequence type="described" ref="VSP_002594"/>
    </isoform>
    <isoform>
        <id>P97798-3</id>
        <name>3</name>
        <sequence type="described" ref="VSP_002595"/>
    </isoform>
    <isoform>
        <id>P97798-4</id>
        <name>4</name>
        <sequence type="described" ref="VSP_002596"/>
    </isoform>
    <isoform>
        <id>P97798-5</id>
        <name>5</name>
        <sequence type="described" ref="VSP_002597"/>
    </isoform>
    <text>Additional isoforms seem to exist.</text>
</comment>
<comment type="tissue specificity">
    <text>Widely expressed.</text>
</comment>
<comment type="developmental stage">
    <text>Expressed ubiquitously throughout the mid to late stages of gestation and in adult tissues. Strong expression is observed in the ventral region of the ventricular zone of the 15.5 dpc mouse neural tube, as well as in the ventricular zones of the mesencephalon and rhombencephalon. Isoform 3 and isoform 4 are expressed at higher level compared to other isoforms between 11.5 dpc and 16.5 dpc.</text>
</comment>
<comment type="domain">
    <text>The Fibronectin repeats 5 and 6 mediate interaction with RGM family molecules.</text>
</comment>
<comment type="miscellaneous">
    <molecule>Isoform 3</molecule>
    <text evidence="12">Expression developmentally regulated.</text>
</comment>
<comment type="miscellaneous">
    <molecule>Isoform 4</molecule>
    <text evidence="12">Expression developmentally regulated.</text>
</comment>
<comment type="miscellaneous">
    <molecule>Isoform 5</molecule>
    <text evidence="12">Expression developmentally regulated.</text>
</comment>
<comment type="similarity">
    <text evidence="12">Belongs to the immunoglobulin superfamily. DCC family.</text>
</comment>
<comment type="sequence caution" evidence="12">
    <conflict type="frameshift">
        <sequence resource="EMBL-CDS" id="CAA70727"/>
    </conflict>
</comment>
<dbReference type="EMBL" id="Y09535">
    <property type="protein sequence ID" value="CAA70727.1"/>
    <property type="status" value="ALT_FRAME"/>
    <property type="molecule type" value="mRNA"/>
</dbReference>
<dbReference type="CCDS" id="CCDS23246.1">
    <molecule id="P97798-1"/>
</dbReference>
<dbReference type="RefSeq" id="NP_001395198.1">
    <molecule id="P97798-4"/>
    <property type="nucleotide sequence ID" value="NM_001408269.1"/>
</dbReference>
<dbReference type="RefSeq" id="NP_001395199.1">
    <molecule id="P97798-3"/>
    <property type="nucleotide sequence ID" value="NM_001408270.1"/>
</dbReference>
<dbReference type="RefSeq" id="NP_001395200.1">
    <molecule id="P97798-2"/>
    <property type="nucleotide sequence ID" value="NM_001408271.1"/>
</dbReference>
<dbReference type="RefSeq" id="NP_032710.2">
    <molecule id="P97798-1"/>
    <property type="nucleotide sequence ID" value="NM_008684.3"/>
</dbReference>
<dbReference type="RefSeq" id="XP_006510905.1">
    <property type="nucleotide sequence ID" value="XM_006510842.3"/>
</dbReference>
<dbReference type="RefSeq" id="XP_006510906.1">
    <property type="nucleotide sequence ID" value="XM_006510843.3"/>
</dbReference>
<dbReference type="RefSeq" id="XP_006510907.1">
    <property type="nucleotide sequence ID" value="XM_006510844.3"/>
</dbReference>
<dbReference type="PDB" id="4BQ6">
    <property type="method" value="X-ray"/>
    <property type="resolution" value="2.30 A"/>
    <property type="chains" value="A/B=883-1133"/>
</dbReference>
<dbReference type="PDB" id="4BQ7">
    <property type="method" value="X-ray"/>
    <property type="resolution" value="6.60 A"/>
    <property type="chains" value="A/B=883-1133"/>
</dbReference>
<dbReference type="PDB" id="4BQ8">
    <property type="method" value="X-ray"/>
    <property type="resolution" value="2.80 A"/>
    <property type="chains" value="A=883-1083"/>
</dbReference>
<dbReference type="PDB" id="4BQ9">
    <property type="method" value="X-ray"/>
    <property type="resolution" value="2.91 A"/>
    <property type="chains" value="A/B=883-1083"/>
</dbReference>
<dbReference type="PDB" id="4BQB">
    <property type="method" value="X-ray"/>
    <property type="resolution" value="2.70 A"/>
    <property type="chains" value="A/B/C/D=883-1133"/>
</dbReference>
<dbReference type="PDB" id="4BQC">
    <property type="method" value="X-ray"/>
    <property type="resolution" value="3.20 A"/>
    <property type="chains" value="A/B=883-1133"/>
</dbReference>
<dbReference type="PDB" id="4PLN">
    <property type="method" value="X-ray"/>
    <property type="resolution" value="3.20 A"/>
    <property type="chains" value="C/D=765-980"/>
</dbReference>
<dbReference type="PDB" id="4UI2">
    <property type="method" value="X-ray"/>
    <property type="resolution" value="3.15 A"/>
    <property type="chains" value="A=883-1133"/>
</dbReference>
<dbReference type="PDB" id="6Z3M">
    <property type="method" value="X-ray"/>
    <property type="resolution" value="5.50 A"/>
    <property type="chains" value="E/F/K/L/Q/R=883-1134"/>
</dbReference>
<dbReference type="PDBsum" id="4BQ6"/>
<dbReference type="PDBsum" id="4BQ7"/>
<dbReference type="PDBsum" id="4BQ8"/>
<dbReference type="PDBsum" id="4BQ9"/>
<dbReference type="PDBsum" id="4BQB"/>
<dbReference type="PDBsum" id="4BQC"/>
<dbReference type="PDBsum" id="4PLN"/>
<dbReference type="PDBsum" id="4UI2"/>
<dbReference type="PDBsum" id="6Z3M"/>
<dbReference type="BMRB" id="P97798"/>
<dbReference type="SMR" id="P97798"/>
<dbReference type="DIP" id="DIP-32026N"/>
<dbReference type="FunCoup" id="P97798">
    <property type="interactions" value="1609"/>
</dbReference>
<dbReference type="IntAct" id="P97798">
    <property type="interactions" value="5"/>
</dbReference>
<dbReference type="MINT" id="P97798"/>
<dbReference type="STRING" id="10090.ENSMUSP00000063656"/>
<dbReference type="GlyConnect" id="2440">
    <molecule id="P97798-4"/>
    <property type="glycosylation" value="1 N-Linked glycan (1 site)"/>
</dbReference>
<dbReference type="GlyConnect" id="2441">
    <molecule id="P97798-5"/>
    <property type="glycosylation" value="1 N-Linked glycan (1 site)"/>
</dbReference>
<dbReference type="GlyCosmos" id="P97798">
    <property type="glycosylation" value="8 sites, 2 glycans"/>
</dbReference>
<dbReference type="GlyGen" id="P97798">
    <property type="glycosylation" value="13 sites, 9 N-linked glycans (7 sites), 1 O-linked glycan (2 sites)"/>
</dbReference>
<dbReference type="iPTMnet" id="P97798"/>
<dbReference type="PhosphoSitePlus" id="P97798"/>
<dbReference type="SwissPalm" id="P97798"/>
<dbReference type="jPOST" id="P97798"/>
<dbReference type="PaxDb" id="10090-ENSMUSP00000063656"/>
<dbReference type="PeptideAtlas" id="P97798"/>
<dbReference type="ProteomicsDB" id="287373">
    <molecule id="P97798-1"/>
</dbReference>
<dbReference type="ProteomicsDB" id="287374">
    <molecule id="P97798-2"/>
</dbReference>
<dbReference type="ProteomicsDB" id="287375">
    <molecule id="P97798-3"/>
</dbReference>
<dbReference type="ProteomicsDB" id="287376">
    <molecule id="P97798-4"/>
</dbReference>
<dbReference type="ProteomicsDB" id="287377">
    <molecule id="P97798-5"/>
</dbReference>
<dbReference type="Pumba" id="P97798"/>
<dbReference type="Ensembl" id="ENSMUST00000068664.7">
    <molecule id="P97798-1"/>
    <property type="protein sequence ID" value="ENSMUSP00000063656.6"/>
    <property type="gene ID" value="ENSMUSG00000032340.9"/>
</dbReference>
<dbReference type="GeneID" id="18007"/>
<dbReference type="KEGG" id="mmu:18007"/>
<dbReference type="AGR" id="MGI:1097159"/>
<dbReference type="CTD" id="4756"/>
<dbReference type="MGI" id="MGI:1097159">
    <property type="gene designation" value="Neo1"/>
</dbReference>
<dbReference type="eggNOG" id="KOG4221">
    <property type="taxonomic scope" value="Eukaryota"/>
</dbReference>
<dbReference type="GeneTree" id="ENSGT00940000156684"/>
<dbReference type="InParanoid" id="P97798"/>
<dbReference type="OMA" id="NDVGNTQ"/>
<dbReference type="OrthoDB" id="114660at2759"/>
<dbReference type="PhylomeDB" id="P97798"/>
<dbReference type="CD-CODE" id="CE726F99">
    <property type="entry name" value="Postsynaptic density"/>
</dbReference>
<dbReference type="ChiTaRS" id="Neo1">
    <property type="organism name" value="mouse"/>
</dbReference>
<dbReference type="EvolutionaryTrace" id="P97798"/>
<dbReference type="PRO" id="PR:P97798"/>
<dbReference type="Proteomes" id="UP000000589">
    <property type="component" value="Chromosome 9"/>
</dbReference>
<dbReference type="RNAct" id="P97798">
    <property type="molecule type" value="protein"/>
</dbReference>
<dbReference type="GO" id="GO:0009986">
    <property type="term" value="C:cell surface"/>
    <property type="evidence" value="ECO:0000314"/>
    <property type="project" value="MGI"/>
</dbReference>
<dbReference type="GO" id="GO:0098978">
    <property type="term" value="C:glutamatergic synapse"/>
    <property type="evidence" value="ECO:0000314"/>
    <property type="project" value="SynGO"/>
</dbReference>
<dbReference type="GO" id="GO:0005794">
    <property type="term" value="C:Golgi apparatus"/>
    <property type="evidence" value="ECO:0007669"/>
    <property type="project" value="Ensembl"/>
</dbReference>
<dbReference type="GO" id="GO:0030426">
    <property type="term" value="C:growth cone"/>
    <property type="evidence" value="ECO:0000314"/>
    <property type="project" value="MGI"/>
</dbReference>
<dbReference type="GO" id="GO:0097708">
    <property type="term" value="C:intracellular vesicle"/>
    <property type="evidence" value="ECO:0000314"/>
    <property type="project" value="MGI"/>
</dbReference>
<dbReference type="GO" id="GO:0016020">
    <property type="term" value="C:membrane"/>
    <property type="evidence" value="ECO:0000314"/>
    <property type="project" value="MGI"/>
</dbReference>
<dbReference type="GO" id="GO:0005654">
    <property type="term" value="C:nucleoplasm"/>
    <property type="evidence" value="ECO:0007669"/>
    <property type="project" value="Ensembl"/>
</dbReference>
<dbReference type="GO" id="GO:0005886">
    <property type="term" value="C:plasma membrane"/>
    <property type="evidence" value="ECO:0000304"/>
    <property type="project" value="Reactome"/>
</dbReference>
<dbReference type="GO" id="GO:0098797">
    <property type="term" value="C:plasma membrane protein complex"/>
    <property type="evidence" value="ECO:0007669"/>
    <property type="project" value="Ensembl"/>
</dbReference>
<dbReference type="GO" id="GO:0098839">
    <property type="term" value="C:postsynaptic density membrane"/>
    <property type="evidence" value="ECO:0000314"/>
    <property type="project" value="SynGO"/>
</dbReference>
<dbReference type="GO" id="GO:0070700">
    <property type="term" value="F:BMP receptor binding"/>
    <property type="evidence" value="ECO:0000353"/>
    <property type="project" value="BHF-UCL"/>
</dbReference>
<dbReference type="GO" id="GO:0045296">
    <property type="term" value="F:cadherin binding"/>
    <property type="evidence" value="ECO:0000314"/>
    <property type="project" value="MGI"/>
</dbReference>
<dbReference type="GO" id="GO:0039706">
    <property type="term" value="F:co-receptor binding"/>
    <property type="evidence" value="ECO:0007669"/>
    <property type="project" value="Ensembl"/>
</dbReference>
<dbReference type="GO" id="GO:0038023">
    <property type="term" value="F:signaling receptor activity"/>
    <property type="evidence" value="ECO:0000353"/>
    <property type="project" value="MGI"/>
</dbReference>
<dbReference type="GO" id="GO:0007155">
    <property type="term" value="P:cell adhesion"/>
    <property type="evidence" value="ECO:0007669"/>
    <property type="project" value="UniProtKB-KW"/>
</dbReference>
<dbReference type="GO" id="GO:0006879">
    <property type="term" value="P:intracellular iron ion homeostasis"/>
    <property type="evidence" value="ECO:0000315"/>
    <property type="project" value="MGI"/>
</dbReference>
<dbReference type="GO" id="GO:0060586">
    <property type="term" value="P:multicellular organismal-level iron ion homeostasis"/>
    <property type="evidence" value="ECO:0000266"/>
    <property type="project" value="MGI"/>
</dbReference>
<dbReference type="GO" id="GO:0007520">
    <property type="term" value="P:myoblast fusion"/>
    <property type="evidence" value="ECO:0000315"/>
    <property type="project" value="MGI"/>
</dbReference>
<dbReference type="GO" id="GO:0048681">
    <property type="term" value="P:negative regulation of axon regeneration"/>
    <property type="evidence" value="ECO:0000315"/>
    <property type="project" value="MGI"/>
</dbReference>
<dbReference type="GO" id="GO:0050709">
    <property type="term" value="P:negative regulation of protein secretion"/>
    <property type="evidence" value="ECO:0000314"/>
    <property type="project" value="MGI"/>
</dbReference>
<dbReference type="GO" id="GO:0030513">
    <property type="term" value="P:positive regulation of BMP signaling pathway"/>
    <property type="evidence" value="ECO:0000316"/>
    <property type="project" value="MGI"/>
</dbReference>
<dbReference type="GO" id="GO:0009306">
    <property type="term" value="P:protein secretion"/>
    <property type="evidence" value="ECO:0000314"/>
    <property type="project" value="MGI"/>
</dbReference>
<dbReference type="GO" id="GO:0048679">
    <property type="term" value="P:regulation of axon regeneration"/>
    <property type="evidence" value="ECO:0000316"/>
    <property type="project" value="MGI"/>
</dbReference>
<dbReference type="GO" id="GO:0006355">
    <property type="term" value="P:regulation of DNA-templated transcription"/>
    <property type="evidence" value="ECO:0000314"/>
    <property type="project" value="MGI"/>
</dbReference>
<dbReference type="GO" id="GO:0099550">
    <property type="term" value="P:trans-synaptic signaling, modulating synaptic transmission"/>
    <property type="evidence" value="ECO:0000314"/>
    <property type="project" value="SynGO"/>
</dbReference>
<dbReference type="CDD" id="cd00063">
    <property type="entry name" value="FN3"/>
    <property type="match status" value="6"/>
</dbReference>
<dbReference type="CDD" id="cd00096">
    <property type="entry name" value="Ig"/>
    <property type="match status" value="1"/>
</dbReference>
<dbReference type="CDD" id="cd05722">
    <property type="entry name" value="IgI_1_Neogenin_like"/>
    <property type="match status" value="1"/>
</dbReference>
<dbReference type="CDD" id="cd05723">
    <property type="entry name" value="IgI_4_Neogenin_like"/>
    <property type="match status" value="1"/>
</dbReference>
<dbReference type="FunFam" id="2.60.40.10:FF:000004">
    <property type="entry name" value="DCC isoform 1"/>
    <property type="match status" value="2"/>
</dbReference>
<dbReference type="FunFam" id="2.60.40.10:FF:000316">
    <property type="entry name" value="Neogenin 1"/>
    <property type="match status" value="1"/>
</dbReference>
<dbReference type="FunFam" id="2.60.40.10:FF:000777">
    <property type="entry name" value="Neogenin 1"/>
    <property type="match status" value="1"/>
</dbReference>
<dbReference type="FunFam" id="2.60.40.10:FF:000101">
    <property type="entry name" value="Neogenin isoform 1"/>
    <property type="match status" value="1"/>
</dbReference>
<dbReference type="FunFam" id="2.60.40.10:FF:000106">
    <property type="entry name" value="Neogenin isoform 1"/>
    <property type="match status" value="1"/>
</dbReference>
<dbReference type="FunFam" id="2.60.40.10:FF:000133">
    <property type="entry name" value="Neogenin isoform 1"/>
    <property type="match status" value="1"/>
</dbReference>
<dbReference type="FunFam" id="2.60.40.10:FF:000189">
    <property type="entry name" value="Neogenin isoform 3"/>
    <property type="match status" value="1"/>
</dbReference>
<dbReference type="FunFam" id="2.60.40.10:FF:000216">
    <property type="entry name" value="neogenin isoform X1"/>
    <property type="match status" value="1"/>
</dbReference>
<dbReference type="FunFam" id="2.60.40.10:FF:000187">
    <property type="entry name" value="neogenin isoform X2"/>
    <property type="match status" value="1"/>
</dbReference>
<dbReference type="Gene3D" id="2.60.40.10">
    <property type="entry name" value="Immunoglobulins"/>
    <property type="match status" value="10"/>
</dbReference>
<dbReference type="InterPro" id="IPR003961">
    <property type="entry name" value="FN3_dom"/>
</dbReference>
<dbReference type="InterPro" id="IPR036116">
    <property type="entry name" value="FN3_sf"/>
</dbReference>
<dbReference type="InterPro" id="IPR007110">
    <property type="entry name" value="Ig-like_dom"/>
</dbReference>
<dbReference type="InterPro" id="IPR036179">
    <property type="entry name" value="Ig-like_dom_sf"/>
</dbReference>
<dbReference type="InterPro" id="IPR013783">
    <property type="entry name" value="Ig-like_fold"/>
</dbReference>
<dbReference type="InterPro" id="IPR013098">
    <property type="entry name" value="Ig_I-set"/>
</dbReference>
<dbReference type="InterPro" id="IPR003599">
    <property type="entry name" value="Ig_sub"/>
</dbReference>
<dbReference type="InterPro" id="IPR003598">
    <property type="entry name" value="Ig_sub2"/>
</dbReference>
<dbReference type="InterPro" id="IPR010560">
    <property type="entry name" value="Neogenin_C"/>
</dbReference>
<dbReference type="PANTHER" id="PTHR44170:SF14">
    <property type="entry name" value="NEOGENIN"/>
    <property type="match status" value="1"/>
</dbReference>
<dbReference type="PANTHER" id="PTHR44170">
    <property type="entry name" value="PROTEIN SIDEKICK"/>
    <property type="match status" value="1"/>
</dbReference>
<dbReference type="Pfam" id="PF00041">
    <property type="entry name" value="fn3"/>
    <property type="match status" value="6"/>
</dbReference>
<dbReference type="Pfam" id="PF07679">
    <property type="entry name" value="I-set"/>
    <property type="match status" value="3"/>
</dbReference>
<dbReference type="Pfam" id="PF13895">
    <property type="entry name" value="Ig_2"/>
    <property type="match status" value="1"/>
</dbReference>
<dbReference type="Pfam" id="PF06583">
    <property type="entry name" value="Neogenin_C"/>
    <property type="match status" value="1"/>
</dbReference>
<dbReference type="PRINTS" id="PR00014">
    <property type="entry name" value="FNTYPEIII"/>
</dbReference>
<dbReference type="SMART" id="SM00060">
    <property type="entry name" value="FN3"/>
    <property type="match status" value="6"/>
</dbReference>
<dbReference type="SMART" id="SM00409">
    <property type="entry name" value="IG"/>
    <property type="match status" value="4"/>
</dbReference>
<dbReference type="SMART" id="SM00408">
    <property type="entry name" value="IGc2"/>
    <property type="match status" value="4"/>
</dbReference>
<dbReference type="SUPFAM" id="SSF49265">
    <property type="entry name" value="Fibronectin type III"/>
    <property type="match status" value="3"/>
</dbReference>
<dbReference type="SUPFAM" id="SSF48726">
    <property type="entry name" value="Immunoglobulin"/>
    <property type="match status" value="4"/>
</dbReference>
<dbReference type="PROSITE" id="PS50853">
    <property type="entry name" value="FN3"/>
    <property type="match status" value="6"/>
</dbReference>
<dbReference type="PROSITE" id="PS50835">
    <property type="entry name" value="IG_LIKE"/>
    <property type="match status" value="4"/>
</dbReference>
<reference key="1">
    <citation type="journal article" date="1997" name="Oncogene">
        <title>Mouse neogenin, a DCC-like molecule, has four splice variants and is expressed widely in the adult mouse and during embryogenesis.</title>
        <authorList>
            <person name="Keeling S.L."/>
            <person name="Gad J.M."/>
            <person name="Cooper H.M."/>
        </authorList>
    </citation>
    <scope>NUCLEOTIDE SEQUENCE [MRNA]</scope>
    <scope>ALTERNATIVE SPLICING</scope>
    <source>
        <tissue>Brain</tissue>
    </source>
</reference>
<reference key="2">
    <citation type="journal article" date="2007" name="J. Biol. Chem.">
        <title>Neogenin-RGMa signaling at the growth cone is bone morphogenetic protein-independent and involves RhoA, ROCK, and PKC.</title>
        <authorList>
            <person name="Conrad S."/>
            <person name="Genth H."/>
            <person name="Hofmann F."/>
            <person name="Just I."/>
            <person name="Skutella T."/>
        </authorList>
    </citation>
    <scope>INTERACTION WITH RGMA</scope>
</reference>
<reference key="3">
    <citation type="journal article" date="2007" name="Nat. Cell Biol.">
        <title>Myosin X regulates netrin receptors and functions in axonal path-finding.</title>
        <authorList>
            <person name="Zhu X.J."/>
            <person name="Wang C.Z."/>
            <person name="Dai P.G."/>
            <person name="Xie Y."/>
            <person name="Song N.N."/>
            <person name="Liu Y."/>
            <person name="Du Q.S."/>
            <person name="Mei L."/>
            <person name="Ding Y.Q."/>
            <person name="Xiong W.C."/>
        </authorList>
    </citation>
    <scope>INTERACTION WITH MYO10</scope>
</reference>
<reference key="4">
    <citation type="journal article" date="2009" name="Mol. Cell. Proteomics">
        <title>The mouse C2C12 myoblast cell surface N-linked glycoproteome: identification, glycosite occupancy, and membrane orientation.</title>
        <authorList>
            <person name="Gundry R.L."/>
            <person name="Raginski K."/>
            <person name="Tarasova Y."/>
            <person name="Tchernyshyov I."/>
            <person name="Bausch-Fluck D."/>
            <person name="Elliott S.T."/>
            <person name="Boheler K.R."/>
            <person name="Van Eyk J.E."/>
            <person name="Wollscheid B."/>
        </authorList>
    </citation>
    <scope>GLYCOSYLATION [LARGE SCALE ANALYSIS] AT ASN-221 AND ASN-501</scope>
    <source>
        <tissue>Myoblast</tissue>
    </source>
</reference>
<reference key="5">
    <citation type="journal article" date="2009" name="Nat. Biotechnol.">
        <title>Mass-spectrometric identification and relative quantification of N-linked cell surface glycoproteins.</title>
        <authorList>
            <person name="Wollscheid B."/>
            <person name="Bausch-Fluck D."/>
            <person name="Henderson C."/>
            <person name="O'Brien R."/>
            <person name="Bibel M."/>
            <person name="Schiess R."/>
            <person name="Aebersold R."/>
            <person name="Watts J.D."/>
        </authorList>
    </citation>
    <scope>GLYCOSYLATION [LARGE SCALE ANALYSIS] AT ASN-221; ASN-501 AND ASN-670</scope>
</reference>
<reference key="6">
    <citation type="journal article" date="2010" name="Cell">
        <title>A tissue-specific atlas of mouse protein phosphorylation and expression.</title>
        <authorList>
            <person name="Huttlin E.L."/>
            <person name="Jedrychowski M.P."/>
            <person name="Elias J.E."/>
            <person name="Goswami T."/>
            <person name="Rad R."/>
            <person name="Beausoleil S.A."/>
            <person name="Villen J."/>
            <person name="Haas W."/>
            <person name="Sowa M.E."/>
            <person name="Gygi S.P."/>
        </authorList>
    </citation>
    <scope>PHOSPHORYLATION [LARGE SCALE ANALYSIS] AT SER-1209; SER-1225; THR-1229; SER-1463 AND SER-1466</scope>
    <scope>IDENTIFICATION BY MASS SPECTROMETRY [LARGE SCALE ANALYSIS]</scope>
    <source>
        <tissue>Brain</tissue>
        <tissue>Brown adipose tissue</tissue>
        <tissue>Heart</tissue>
        <tissue>Kidney</tissue>
        <tissue>Liver</tissue>
        <tissue>Lung</tissue>
        <tissue>Testis</tissue>
    </source>
</reference>
<reference key="7">
    <citation type="journal article" date="2013" name="Science">
        <title>Structure of the repulsive guidance molecule (RGM)-neogenin signaling hub.</title>
        <authorList>
            <person name="Bell C.H."/>
            <person name="Healey E."/>
            <person name="van Erp S."/>
            <person name="Bishop B."/>
            <person name="Tang C."/>
            <person name="Gilbert R.J."/>
            <person name="Aricescu A.R."/>
            <person name="Pasterkamp R.J."/>
            <person name="Siebold C."/>
        </authorList>
    </citation>
    <scope>X-RAY CRYSTALLOGRAPHY (2.3 ANGSTROMS) OF 883-1134 IN COMPLEX WITH HUMAN RGMB</scope>
    <scope>FUNCTION</scope>
</reference>
<name>NEO1_MOUSE</name>
<proteinExistence type="evidence at protein level"/>
<protein>
    <recommendedName>
        <fullName evidence="12">Neogenin</fullName>
    </recommendedName>
</protein>
<sequence length="1492" mass="162920">MAAEREAGRLLCTSSSRRCCPPPPLLLLLPLLLLLGRPASGAAATKSGSPPQSAGASVRTFTPFYFLVEPVDTLSVRGSSVILNCSAYSEPSPNIEWKKDGTFLNLESDDRRQLLPDGSLFISNVVHSKHNKPDEGFYQCVATVDNLGTIVSRTAKLTVAGLPRFTSQPEPSSVYVGNSAILNCEVNADLVPFVRWEQNRQPLLLDDRIVKLPSGTLVISNATEGDGGLYRCIVESGGPPKFSDEAELKVLQDPEEIVDLVFLMRPSSMMKVTGQSAVLPCVVSGLPAPVVRWMKNEEVLDTESSGRLVLLAGGCLEISDVTEDDAGTYFCIADNGNKTVEAQAELTVQVPPGFLKQPANIYAHESMDIVFECEVTGKPTPTVKWVKNGDVVIPSDYFKIVKEHNLQVLGLVKSDEGFYQCIAENDVGNAQAGAQLIILEHDVAIPTLPPTSLTSATTDHLAPATTGPLPSAPRDVVASLVSTRFIKLTWRTPASDPHGDNLTYSVFYTKEGVARERVENTSQPGEMQVTIQNLMPATVYIFKVMAQNKHGSGESSAPLRVETQPEVQLPGPAPNIRAYATSPTSITVTWETPLSGNGEIQNYKLYYMEKGTDKEQDIDVSSHSYTINGLKKYTEYSFRVVAYNKHGPGVSTQDVAVRTLSDVPSAAPQNLSLEVRNSKSIVIHWQPPSSTTQNGQITGYKIRYRKASRKSDVTETLVTGTQLSQLIEGLDRGTEYNFRVAALTVNGTGPATDWLSAETFESDLDETRVPEVPSSLHVRPLVTSIVVSWTPPENQNIVVRGYAIGYGIGSPHAQTIKVDYKQRYYTIENLDPSSHYVITLKAFNNVGEGIPLYESAVTRPHTDTSEVDLFVINAPYTPVPDPTPMMPPVGVQASILSHDTIRITWADNSLPKHQKITDSRYYTVRWKTNIPANTKYKNANATTLSYLVTGLKPNTLYEFSVMVTKGRRSSTWSMTAHGATFELVPTSPPKDVTVVSKEGKPRTIIVNWQPPSEANGKITGYIIYYSTDVNAEIHDWVIEPVVGNRLTHQIQELTLDTPYYFKIQARNSKGMGPMSEAVQFRTPKADSSDKMPNDQALGSAGKGSRLPDLGSDYKPPMSGSNSPHGSPTSPLDSNMLLVIIVSVGVITIVVVVVIAVFCTRRTTSHQKKKRAACKSVNGSHKYKGNCKDVKPPDLWIHHERLELKPIDKSPDPNPVMTDTPIPRNSQDITPVDNSMDSNIHQRRNSYRGHESEDSMSTLAGRRGMRPKMMMPFDSQPPQPVISAHPIHSLDNPHHHFHSSSLASPARSHLYHPSSPWPIGTSMSLSDRANSTESVRNTPSTDTMPASSSQTCCTDHQDPEGATSSSYLASSQEEDSGQSLPTAHVRPSHPLKSFAVPAIPPPGPPLYDPALPSTPLLSQQALNHHIHSVKTASIGTLGRSRPPMPVVVPSAPEVQETTRMLEDSESSYEPDELTKEMAHLEGLMKDLNAITTA</sequence>
<gene>
    <name evidence="13" type="primary">Neo1</name>
    <name type="synonym">Ngn</name>
</gene>
<keyword id="KW-0002">3D-structure</keyword>
<keyword id="KW-0025">Alternative splicing</keyword>
<keyword id="KW-0130">Cell adhesion</keyword>
<keyword id="KW-1003">Cell membrane</keyword>
<keyword id="KW-1015">Disulfide bond</keyword>
<keyword id="KW-0325">Glycoprotein</keyword>
<keyword id="KW-0393">Immunoglobulin domain</keyword>
<keyword id="KW-0472">Membrane</keyword>
<keyword id="KW-0597">Phosphoprotein</keyword>
<keyword id="KW-1185">Reference proteome</keyword>
<keyword id="KW-0677">Repeat</keyword>
<keyword id="KW-0732">Signal</keyword>
<keyword id="KW-0812">Transmembrane</keyword>
<keyword id="KW-1133">Transmembrane helix</keyword>
<evidence type="ECO:0000250" key="1"/>
<evidence type="ECO:0000250" key="2">
    <source>
        <dbReference type="UniProtKB" id="Q92859"/>
    </source>
</evidence>
<evidence type="ECO:0000255" key="3"/>
<evidence type="ECO:0000255" key="4">
    <source>
        <dbReference type="PROSITE-ProRule" id="PRU00114"/>
    </source>
</evidence>
<evidence type="ECO:0000255" key="5">
    <source>
        <dbReference type="PROSITE-ProRule" id="PRU00316"/>
    </source>
</evidence>
<evidence type="ECO:0000256" key="6">
    <source>
        <dbReference type="SAM" id="MobiDB-lite"/>
    </source>
</evidence>
<evidence type="ECO:0000269" key="7">
    <source>
    </source>
</evidence>
<evidence type="ECO:0000269" key="8">
    <source>
    </source>
</evidence>
<evidence type="ECO:0000269" key="9">
    <source>
    </source>
</evidence>
<evidence type="ECO:0000269" key="10">
    <source>
    </source>
</evidence>
<evidence type="ECO:0000269" key="11">
    <source>
    </source>
</evidence>
<evidence type="ECO:0000305" key="12"/>
<evidence type="ECO:0000312" key="13">
    <source>
        <dbReference type="MGI" id="MGI:1097159"/>
    </source>
</evidence>
<evidence type="ECO:0007744" key="14">
    <source>
    </source>
</evidence>
<evidence type="ECO:0007829" key="15">
    <source>
        <dbReference type="PDB" id="4BQ6"/>
    </source>
</evidence>
<evidence type="ECO:0007829" key="16">
    <source>
        <dbReference type="PDB" id="4PLN"/>
    </source>
</evidence>
<accession>P97798</accession>